<reference key="1">
    <citation type="journal article" date="2004" name="Proc. Natl. Acad. Sci. U.S.A.">
        <title>Structural flexibility in the Burkholderia mallei genome.</title>
        <authorList>
            <person name="Nierman W.C."/>
            <person name="DeShazer D."/>
            <person name="Kim H.S."/>
            <person name="Tettelin H."/>
            <person name="Nelson K.E."/>
            <person name="Feldblyum T.V."/>
            <person name="Ulrich R.L."/>
            <person name="Ronning C.M."/>
            <person name="Brinkac L.M."/>
            <person name="Daugherty S.C."/>
            <person name="Davidsen T.D."/>
            <person name="DeBoy R.T."/>
            <person name="Dimitrov G."/>
            <person name="Dodson R.J."/>
            <person name="Durkin A.S."/>
            <person name="Gwinn M.L."/>
            <person name="Haft D.H."/>
            <person name="Khouri H.M."/>
            <person name="Kolonay J.F."/>
            <person name="Madupu R."/>
            <person name="Mohammoud Y."/>
            <person name="Nelson W.C."/>
            <person name="Radune D."/>
            <person name="Romero C.M."/>
            <person name="Sarria S."/>
            <person name="Selengut J."/>
            <person name="Shamblin C."/>
            <person name="Sullivan S.A."/>
            <person name="White O."/>
            <person name="Yu Y."/>
            <person name="Zafar N."/>
            <person name="Zhou L."/>
            <person name="Fraser C.M."/>
        </authorList>
    </citation>
    <scope>NUCLEOTIDE SEQUENCE [LARGE SCALE GENOMIC DNA]</scope>
    <source>
        <strain>ATCC 23344</strain>
    </source>
</reference>
<gene>
    <name evidence="1" type="primary">ruvA</name>
    <name type="ordered locus">BMA2354</name>
</gene>
<proteinExistence type="inferred from homology"/>
<evidence type="ECO:0000255" key="1">
    <source>
        <dbReference type="HAMAP-Rule" id="MF_00031"/>
    </source>
</evidence>
<organism>
    <name type="scientific">Burkholderia mallei (strain ATCC 23344)</name>
    <dbReference type="NCBI Taxonomy" id="243160"/>
    <lineage>
        <taxon>Bacteria</taxon>
        <taxon>Pseudomonadati</taxon>
        <taxon>Pseudomonadota</taxon>
        <taxon>Betaproteobacteria</taxon>
        <taxon>Burkholderiales</taxon>
        <taxon>Burkholderiaceae</taxon>
        <taxon>Burkholderia</taxon>
        <taxon>pseudomallei group</taxon>
    </lineage>
</organism>
<comment type="function">
    <text evidence="1">The RuvA-RuvB-RuvC complex processes Holliday junction (HJ) DNA during genetic recombination and DNA repair, while the RuvA-RuvB complex plays an important role in the rescue of blocked DNA replication forks via replication fork reversal (RFR). RuvA specifically binds to HJ cruciform DNA, conferring on it an open structure. The RuvB hexamer acts as an ATP-dependent pump, pulling dsDNA into and through the RuvAB complex. HJ branch migration allows RuvC to scan DNA until it finds its consensus sequence, where it cleaves and resolves the cruciform DNA.</text>
</comment>
<comment type="subunit">
    <text evidence="1">Homotetramer. Forms an RuvA(8)-RuvB(12)-Holliday junction (HJ) complex. HJ DNA is sandwiched between 2 RuvA tetramers; dsDNA enters through RuvA and exits via RuvB. An RuvB hexamer assembles on each DNA strand where it exits the tetramer. Each RuvB hexamer is contacted by two RuvA subunits (via domain III) on 2 adjacent RuvB subunits; this complex drives branch migration. In the full resolvosome a probable DNA-RuvA(4)-RuvB(12)-RuvC(2) complex forms which resolves the HJ.</text>
</comment>
<comment type="subcellular location">
    <subcellularLocation>
        <location evidence="1">Cytoplasm</location>
    </subcellularLocation>
</comment>
<comment type="domain">
    <text evidence="1">Has three domains with a flexible linker between the domains II and III and assumes an 'L' shape. Domain III is highly mobile and contacts RuvB.</text>
</comment>
<comment type="similarity">
    <text evidence="1">Belongs to the RuvA family.</text>
</comment>
<accession>Q62HA8</accession>
<feature type="chain" id="PRO_0000224849" description="Holliday junction branch migration complex subunit RuvA">
    <location>
        <begin position="1"/>
        <end position="193"/>
    </location>
</feature>
<feature type="region of interest" description="Domain I" evidence="1">
    <location>
        <begin position="1"/>
        <end position="64"/>
    </location>
</feature>
<feature type="region of interest" description="Domain II" evidence="1">
    <location>
        <begin position="65"/>
        <end position="139"/>
    </location>
</feature>
<feature type="region of interest" description="Flexible linker" evidence="1">
    <location>
        <begin position="139"/>
        <end position="143"/>
    </location>
</feature>
<feature type="region of interest" description="Domain III" evidence="1">
    <location>
        <begin position="144"/>
        <end position="193"/>
    </location>
</feature>
<protein>
    <recommendedName>
        <fullName evidence="1">Holliday junction branch migration complex subunit RuvA</fullName>
    </recommendedName>
</protein>
<keyword id="KW-0963">Cytoplasm</keyword>
<keyword id="KW-0227">DNA damage</keyword>
<keyword id="KW-0233">DNA recombination</keyword>
<keyword id="KW-0234">DNA repair</keyword>
<keyword id="KW-0238">DNA-binding</keyword>
<keyword id="KW-1185">Reference proteome</keyword>
<dbReference type="EMBL" id="CP000010">
    <property type="protein sequence ID" value="AAU50215.1"/>
    <property type="molecule type" value="Genomic_DNA"/>
</dbReference>
<dbReference type="RefSeq" id="WP_004194029.1">
    <property type="nucleotide sequence ID" value="NC_006348.1"/>
</dbReference>
<dbReference type="RefSeq" id="YP_103912.1">
    <property type="nucleotide sequence ID" value="NC_006348.1"/>
</dbReference>
<dbReference type="SMR" id="Q62HA8"/>
<dbReference type="GeneID" id="93061493"/>
<dbReference type="KEGG" id="bma:BMA2354"/>
<dbReference type="PATRIC" id="fig|243160.12.peg.2425"/>
<dbReference type="eggNOG" id="COG0632">
    <property type="taxonomic scope" value="Bacteria"/>
</dbReference>
<dbReference type="HOGENOM" id="CLU_087936_0_0_4"/>
<dbReference type="Proteomes" id="UP000006693">
    <property type="component" value="Chromosome 1"/>
</dbReference>
<dbReference type="GO" id="GO:0005737">
    <property type="term" value="C:cytoplasm"/>
    <property type="evidence" value="ECO:0007669"/>
    <property type="project" value="UniProtKB-SubCell"/>
</dbReference>
<dbReference type="GO" id="GO:0009379">
    <property type="term" value="C:Holliday junction helicase complex"/>
    <property type="evidence" value="ECO:0007669"/>
    <property type="project" value="InterPro"/>
</dbReference>
<dbReference type="GO" id="GO:0048476">
    <property type="term" value="C:Holliday junction resolvase complex"/>
    <property type="evidence" value="ECO:0007669"/>
    <property type="project" value="UniProtKB-UniRule"/>
</dbReference>
<dbReference type="GO" id="GO:0005524">
    <property type="term" value="F:ATP binding"/>
    <property type="evidence" value="ECO:0007669"/>
    <property type="project" value="InterPro"/>
</dbReference>
<dbReference type="GO" id="GO:0000400">
    <property type="term" value="F:four-way junction DNA binding"/>
    <property type="evidence" value="ECO:0007669"/>
    <property type="project" value="UniProtKB-UniRule"/>
</dbReference>
<dbReference type="GO" id="GO:0009378">
    <property type="term" value="F:four-way junction helicase activity"/>
    <property type="evidence" value="ECO:0007669"/>
    <property type="project" value="InterPro"/>
</dbReference>
<dbReference type="GO" id="GO:0006310">
    <property type="term" value="P:DNA recombination"/>
    <property type="evidence" value="ECO:0007669"/>
    <property type="project" value="UniProtKB-UniRule"/>
</dbReference>
<dbReference type="GO" id="GO:0006281">
    <property type="term" value="P:DNA repair"/>
    <property type="evidence" value="ECO:0007669"/>
    <property type="project" value="UniProtKB-UniRule"/>
</dbReference>
<dbReference type="CDD" id="cd14332">
    <property type="entry name" value="UBA_RuvA_C"/>
    <property type="match status" value="1"/>
</dbReference>
<dbReference type="Gene3D" id="1.10.150.20">
    <property type="entry name" value="5' to 3' exonuclease, C-terminal subdomain"/>
    <property type="match status" value="1"/>
</dbReference>
<dbReference type="Gene3D" id="1.10.8.10">
    <property type="entry name" value="DNA helicase RuvA subunit, C-terminal domain"/>
    <property type="match status" value="1"/>
</dbReference>
<dbReference type="Gene3D" id="2.40.50.140">
    <property type="entry name" value="Nucleic acid-binding proteins"/>
    <property type="match status" value="1"/>
</dbReference>
<dbReference type="HAMAP" id="MF_00031">
    <property type="entry name" value="DNA_HJ_migration_RuvA"/>
    <property type="match status" value="1"/>
</dbReference>
<dbReference type="InterPro" id="IPR013849">
    <property type="entry name" value="DNA_helicase_Holl-junc_RuvA_I"/>
</dbReference>
<dbReference type="InterPro" id="IPR003583">
    <property type="entry name" value="Hlx-hairpin-Hlx_DNA-bd_motif"/>
</dbReference>
<dbReference type="InterPro" id="IPR012340">
    <property type="entry name" value="NA-bd_OB-fold"/>
</dbReference>
<dbReference type="InterPro" id="IPR000085">
    <property type="entry name" value="RuvA"/>
</dbReference>
<dbReference type="InterPro" id="IPR010994">
    <property type="entry name" value="RuvA_2-like"/>
</dbReference>
<dbReference type="InterPro" id="IPR011114">
    <property type="entry name" value="RuvA_C"/>
</dbReference>
<dbReference type="InterPro" id="IPR036267">
    <property type="entry name" value="RuvA_C_sf"/>
</dbReference>
<dbReference type="NCBIfam" id="TIGR00084">
    <property type="entry name" value="ruvA"/>
    <property type="match status" value="1"/>
</dbReference>
<dbReference type="Pfam" id="PF14520">
    <property type="entry name" value="HHH_5"/>
    <property type="match status" value="1"/>
</dbReference>
<dbReference type="Pfam" id="PF07499">
    <property type="entry name" value="RuvA_C"/>
    <property type="match status" value="1"/>
</dbReference>
<dbReference type="Pfam" id="PF01330">
    <property type="entry name" value="RuvA_N"/>
    <property type="match status" value="1"/>
</dbReference>
<dbReference type="SMART" id="SM00278">
    <property type="entry name" value="HhH1"/>
    <property type="match status" value="2"/>
</dbReference>
<dbReference type="SUPFAM" id="SSF46929">
    <property type="entry name" value="DNA helicase RuvA subunit, C-terminal domain"/>
    <property type="match status" value="1"/>
</dbReference>
<dbReference type="SUPFAM" id="SSF50249">
    <property type="entry name" value="Nucleic acid-binding proteins"/>
    <property type="match status" value="1"/>
</dbReference>
<dbReference type="SUPFAM" id="SSF47781">
    <property type="entry name" value="RuvA domain 2-like"/>
    <property type="match status" value="1"/>
</dbReference>
<sequence length="193" mass="20261">MIGRIAGTLLEKNPPHILVDCNGVGYEVDVPMSTFYNLPHTGEKVVLLTQLIVREDAHLLYGFLTPPERSTFRELLKITGVGARMALAVLSGMSVAELSQAVTLQDAARLTRVPGIGKKTAERLLLELKGKLGADLGPLAGAASPSDHATDILNALVALGYSEKEALAAIKNVPAGTGVSEGIKLSLKALSKA</sequence>
<name>RUVA_BURMA</name>